<keyword id="KW-0488">Methylation</keyword>
<keyword id="KW-0687">Ribonucleoprotein</keyword>
<keyword id="KW-0689">Ribosomal protein</keyword>
<keyword id="KW-0694">RNA-binding</keyword>
<keyword id="KW-0699">rRNA-binding</keyword>
<sequence>MSLSNSLGLLGRKVGMMRLFTDDGDAVPVTVVDVSNNRVTQIKSQETDGYVALQVTFGSRKASRVTKPQAGHLAKAGVEAGEIIREFRVTADTAGQHKAGAVIAASSVFSVGQKVDVQGTSIGKGYAGTIKRHNMSSQRASHGNSRSHNVPGSIGMAQDPGRVFPGKRMTGHLGDVTKTTQNLDVFRIDEARQLLLIKGAIPGSKGGFVTVRPAIKAKPQAAEGAK</sequence>
<comment type="function">
    <text evidence="1">One of the primary rRNA binding proteins, it binds directly near the 3'-end of the 23S rRNA, where it nucleates assembly of the 50S subunit.</text>
</comment>
<comment type="subunit">
    <text evidence="1">Part of the 50S ribosomal subunit. Forms a cluster with proteins L14 and L19.</text>
</comment>
<comment type="PTM">
    <text evidence="1">Methylated by PrmB.</text>
</comment>
<comment type="similarity">
    <text evidence="1">Belongs to the universal ribosomal protein uL3 family.</text>
</comment>
<gene>
    <name evidence="1" type="primary">rplC</name>
    <name type="ordered locus">Vapar_4913</name>
</gene>
<reference key="1">
    <citation type="journal article" date="2011" name="J. Bacteriol.">
        <title>Complete genome sequence of the metabolically versatile plant growth-promoting endophyte, Variovorax paradoxus S110.</title>
        <authorList>
            <person name="Han J.I."/>
            <person name="Choi H.K."/>
            <person name="Lee S.W."/>
            <person name="Orwin P.M."/>
            <person name="Kim J."/>
            <person name="Laroe S.L."/>
            <person name="Kim T.G."/>
            <person name="O'Neil J."/>
            <person name="Leadbetter J.R."/>
            <person name="Lee S.Y."/>
            <person name="Hur C.G."/>
            <person name="Spain J.C."/>
            <person name="Ovchinnikova G."/>
            <person name="Goodwin L."/>
            <person name="Han C."/>
        </authorList>
    </citation>
    <scope>NUCLEOTIDE SEQUENCE [LARGE SCALE GENOMIC DNA]</scope>
    <source>
        <strain>S110</strain>
    </source>
</reference>
<evidence type="ECO:0000255" key="1">
    <source>
        <dbReference type="HAMAP-Rule" id="MF_01325"/>
    </source>
</evidence>
<evidence type="ECO:0000256" key="2">
    <source>
        <dbReference type="SAM" id="MobiDB-lite"/>
    </source>
</evidence>
<evidence type="ECO:0000305" key="3"/>
<feature type="chain" id="PRO_1000214531" description="Large ribosomal subunit protein uL3">
    <location>
        <begin position="1"/>
        <end position="226"/>
    </location>
</feature>
<feature type="region of interest" description="Disordered" evidence="2">
    <location>
        <begin position="135"/>
        <end position="158"/>
    </location>
</feature>
<feature type="compositionally biased region" description="Polar residues" evidence="2">
    <location>
        <begin position="135"/>
        <end position="150"/>
    </location>
</feature>
<feature type="modified residue" description="N5-methylglutamine" evidence="1">
    <location>
        <position position="158"/>
    </location>
</feature>
<organism>
    <name type="scientific">Variovorax paradoxus (strain S110)</name>
    <dbReference type="NCBI Taxonomy" id="543728"/>
    <lineage>
        <taxon>Bacteria</taxon>
        <taxon>Pseudomonadati</taxon>
        <taxon>Pseudomonadota</taxon>
        <taxon>Betaproteobacteria</taxon>
        <taxon>Burkholderiales</taxon>
        <taxon>Comamonadaceae</taxon>
        <taxon>Variovorax</taxon>
    </lineage>
</organism>
<accession>C5CP53</accession>
<dbReference type="EMBL" id="CP001635">
    <property type="protein sequence ID" value="ACS21517.1"/>
    <property type="molecule type" value="Genomic_DNA"/>
</dbReference>
<dbReference type="SMR" id="C5CP53"/>
<dbReference type="STRING" id="543728.Vapar_4913"/>
<dbReference type="KEGG" id="vap:Vapar_4913"/>
<dbReference type="eggNOG" id="COG0087">
    <property type="taxonomic scope" value="Bacteria"/>
</dbReference>
<dbReference type="HOGENOM" id="CLU_044142_4_1_4"/>
<dbReference type="OrthoDB" id="9806135at2"/>
<dbReference type="GO" id="GO:0022625">
    <property type="term" value="C:cytosolic large ribosomal subunit"/>
    <property type="evidence" value="ECO:0007669"/>
    <property type="project" value="TreeGrafter"/>
</dbReference>
<dbReference type="GO" id="GO:0019843">
    <property type="term" value="F:rRNA binding"/>
    <property type="evidence" value="ECO:0007669"/>
    <property type="project" value="UniProtKB-UniRule"/>
</dbReference>
<dbReference type="GO" id="GO:0003735">
    <property type="term" value="F:structural constituent of ribosome"/>
    <property type="evidence" value="ECO:0007669"/>
    <property type="project" value="InterPro"/>
</dbReference>
<dbReference type="GO" id="GO:0006412">
    <property type="term" value="P:translation"/>
    <property type="evidence" value="ECO:0007669"/>
    <property type="project" value="UniProtKB-UniRule"/>
</dbReference>
<dbReference type="FunFam" id="2.40.30.10:FF:000004">
    <property type="entry name" value="50S ribosomal protein L3"/>
    <property type="match status" value="1"/>
</dbReference>
<dbReference type="FunFam" id="3.30.160.810:FF:000001">
    <property type="entry name" value="50S ribosomal protein L3"/>
    <property type="match status" value="1"/>
</dbReference>
<dbReference type="Gene3D" id="3.30.160.810">
    <property type="match status" value="1"/>
</dbReference>
<dbReference type="Gene3D" id="2.40.30.10">
    <property type="entry name" value="Translation factors"/>
    <property type="match status" value="1"/>
</dbReference>
<dbReference type="HAMAP" id="MF_01325_B">
    <property type="entry name" value="Ribosomal_uL3_B"/>
    <property type="match status" value="1"/>
</dbReference>
<dbReference type="InterPro" id="IPR000597">
    <property type="entry name" value="Ribosomal_uL3"/>
</dbReference>
<dbReference type="InterPro" id="IPR019927">
    <property type="entry name" value="Ribosomal_uL3_bac/org-type"/>
</dbReference>
<dbReference type="InterPro" id="IPR019926">
    <property type="entry name" value="Ribosomal_uL3_CS"/>
</dbReference>
<dbReference type="InterPro" id="IPR009000">
    <property type="entry name" value="Transl_B-barrel_sf"/>
</dbReference>
<dbReference type="NCBIfam" id="TIGR03625">
    <property type="entry name" value="L3_bact"/>
    <property type="match status" value="1"/>
</dbReference>
<dbReference type="PANTHER" id="PTHR11229">
    <property type="entry name" value="50S RIBOSOMAL PROTEIN L3"/>
    <property type="match status" value="1"/>
</dbReference>
<dbReference type="PANTHER" id="PTHR11229:SF16">
    <property type="entry name" value="LARGE RIBOSOMAL SUBUNIT PROTEIN UL3C"/>
    <property type="match status" value="1"/>
</dbReference>
<dbReference type="Pfam" id="PF00297">
    <property type="entry name" value="Ribosomal_L3"/>
    <property type="match status" value="1"/>
</dbReference>
<dbReference type="SUPFAM" id="SSF50447">
    <property type="entry name" value="Translation proteins"/>
    <property type="match status" value="1"/>
</dbReference>
<dbReference type="PROSITE" id="PS00474">
    <property type="entry name" value="RIBOSOMAL_L3"/>
    <property type="match status" value="1"/>
</dbReference>
<proteinExistence type="inferred from homology"/>
<protein>
    <recommendedName>
        <fullName evidence="1">Large ribosomal subunit protein uL3</fullName>
    </recommendedName>
    <alternativeName>
        <fullName evidence="3">50S ribosomal protein L3</fullName>
    </alternativeName>
</protein>
<name>RL3_VARPS</name>